<accession>Q63YI7</accession>
<organism>
    <name type="scientific">Burkholderia pseudomallei (strain K96243)</name>
    <dbReference type="NCBI Taxonomy" id="272560"/>
    <lineage>
        <taxon>Bacteria</taxon>
        <taxon>Pseudomonadati</taxon>
        <taxon>Pseudomonadota</taxon>
        <taxon>Betaproteobacteria</taxon>
        <taxon>Burkholderiales</taxon>
        <taxon>Burkholderiaceae</taxon>
        <taxon>Burkholderia</taxon>
        <taxon>pseudomallei group</taxon>
    </lineage>
</organism>
<protein>
    <recommendedName>
        <fullName evidence="1">Acetylglutamate kinase</fullName>
        <ecNumber evidence="1">2.7.2.8</ecNumber>
    </recommendedName>
    <alternativeName>
        <fullName evidence="1">N-acetyl-L-glutamate 5-phosphotransferase</fullName>
    </alternativeName>
    <alternativeName>
        <fullName evidence="1">NAG kinase</fullName>
        <shortName evidence="1">NAGK</shortName>
    </alternativeName>
</protein>
<name>ARGB_BURPS</name>
<sequence>MSEPIDLSQISPALKAEILAEALPYIRRYHGKTVVIKYGGNAMTEERLKQGFARDVILLKLVGINPVIVHGGGPQIDQALKKIGKQGTFIQGMRVTDEETMEVVEWVLGGEVQQDIVTLINHFGGHAVGLTGKDGGLIHARKLMMPDRDNPGEYVDIGQVGEVEAINPAVVKALQDDAFIPVISPIGFGEDGLSYNINADLVAGKLATVLNAEKLVMMTNIPGVMDKEGNLLTDLSAREIDALFEDGTISGGMLPKISSALDAAKSGVKSVHIVDGRIEHSVLLEILTEQPFGTMIRSH</sequence>
<keyword id="KW-0028">Amino-acid biosynthesis</keyword>
<keyword id="KW-0055">Arginine biosynthesis</keyword>
<keyword id="KW-0067">ATP-binding</keyword>
<keyword id="KW-0963">Cytoplasm</keyword>
<keyword id="KW-0418">Kinase</keyword>
<keyword id="KW-0547">Nucleotide-binding</keyword>
<keyword id="KW-1185">Reference proteome</keyword>
<keyword id="KW-0808">Transferase</keyword>
<feature type="chain" id="PRO_0000112601" description="Acetylglutamate kinase">
    <location>
        <begin position="1"/>
        <end position="299"/>
    </location>
</feature>
<feature type="binding site" evidence="1">
    <location>
        <begin position="72"/>
        <end position="73"/>
    </location>
    <ligand>
        <name>substrate</name>
    </ligand>
</feature>
<feature type="binding site" evidence="1">
    <location>
        <position position="94"/>
    </location>
    <ligand>
        <name>substrate</name>
    </ligand>
</feature>
<feature type="binding site" evidence="1">
    <location>
        <position position="196"/>
    </location>
    <ligand>
        <name>substrate</name>
    </ligand>
</feature>
<feature type="site" description="Transition state stabilizer" evidence="1">
    <location>
        <position position="37"/>
    </location>
</feature>
<feature type="site" description="Transition state stabilizer" evidence="1">
    <location>
        <position position="256"/>
    </location>
</feature>
<reference key="1">
    <citation type="journal article" date="2004" name="Proc. Natl. Acad. Sci. U.S.A.">
        <title>Genomic plasticity of the causative agent of melioidosis, Burkholderia pseudomallei.</title>
        <authorList>
            <person name="Holden M.T.G."/>
            <person name="Titball R.W."/>
            <person name="Peacock S.J."/>
            <person name="Cerdeno-Tarraga A.-M."/>
            <person name="Atkins T."/>
            <person name="Crossman L.C."/>
            <person name="Pitt T."/>
            <person name="Churcher C."/>
            <person name="Mungall K.L."/>
            <person name="Bentley S.D."/>
            <person name="Sebaihia M."/>
            <person name="Thomson N.R."/>
            <person name="Bason N."/>
            <person name="Beacham I.R."/>
            <person name="Brooks K."/>
            <person name="Brown K.A."/>
            <person name="Brown N.F."/>
            <person name="Challis G.L."/>
            <person name="Cherevach I."/>
            <person name="Chillingworth T."/>
            <person name="Cronin A."/>
            <person name="Crossett B."/>
            <person name="Davis P."/>
            <person name="DeShazer D."/>
            <person name="Feltwell T."/>
            <person name="Fraser A."/>
            <person name="Hance Z."/>
            <person name="Hauser H."/>
            <person name="Holroyd S."/>
            <person name="Jagels K."/>
            <person name="Keith K.E."/>
            <person name="Maddison M."/>
            <person name="Moule S."/>
            <person name="Price C."/>
            <person name="Quail M.A."/>
            <person name="Rabbinowitsch E."/>
            <person name="Rutherford K."/>
            <person name="Sanders M."/>
            <person name="Simmonds M."/>
            <person name="Songsivilai S."/>
            <person name="Stevens K."/>
            <person name="Tumapa S."/>
            <person name="Vesaratchavest M."/>
            <person name="Whitehead S."/>
            <person name="Yeats C."/>
            <person name="Barrell B.G."/>
            <person name="Oyston P.C.F."/>
            <person name="Parkhill J."/>
        </authorList>
    </citation>
    <scope>NUCLEOTIDE SEQUENCE [LARGE SCALE GENOMIC DNA]</scope>
    <source>
        <strain>K96243</strain>
    </source>
</reference>
<comment type="function">
    <text evidence="1">Catalyzes the ATP-dependent phosphorylation of N-acetyl-L-glutamate.</text>
</comment>
<comment type="catalytic activity">
    <reaction evidence="1">
        <text>N-acetyl-L-glutamate + ATP = N-acetyl-L-glutamyl 5-phosphate + ADP</text>
        <dbReference type="Rhea" id="RHEA:14629"/>
        <dbReference type="ChEBI" id="CHEBI:30616"/>
        <dbReference type="ChEBI" id="CHEBI:44337"/>
        <dbReference type="ChEBI" id="CHEBI:57936"/>
        <dbReference type="ChEBI" id="CHEBI:456216"/>
        <dbReference type="EC" id="2.7.2.8"/>
    </reaction>
</comment>
<comment type="pathway">
    <text evidence="1">Amino-acid biosynthesis; L-arginine biosynthesis; N(2)-acetyl-L-ornithine from L-glutamate: step 2/4.</text>
</comment>
<comment type="subcellular location">
    <subcellularLocation>
        <location evidence="1">Cytoplasm</location>
    </subcellularLocation>
</comment>
<comment type="similarity">
    <text evidence="1">Belongs to the acetylglutamate kinase family. ArgB subfamily.</text>
</comment>
<dbReference type="EC" id="2.7.2.8" evidence="1"/>
<dbReference type="EMBL" id="BX571965">
    <property type="protein sequence ID" value="CAH34187.1"/>
    <property type="molecule type" value="Genomic_DNA"/>
</dbReference>
<dbReference type="RefSeq" id="WP_004200214.1">
    <property type="nucleotide sequence ID" value="NZ_CP009538.1"/>
</dbReference>
<dbReference type="RefSeq" id="YP_106828.1">
    <property type="nucleotide sequence ID" value="NC_006350.1"/>
</dbReference>
<dbReference type="SMR" id="Q63YI7"/>
<dbReference type="STRING" id="272560.BPSL0200"/>
<dbReference type="GeneID" id="93058708"/>
<dbReference type="KEGG" id="bps:BPSL0200"/>
<dbReference type="PATRIC" id="fig|272560.51.peg.1519"/>
<dbReference type="eggNOG" id="COG0548">
    <property type="taxonomic scope" value="Bacteria"/>
</dbReference>
<dbReference type="UniPathway" id="UPA00068">
    <property type="reaction ID" value="UER00107"/>
</dbReference>
<dbReference type="Proteomes" id="UP000000605">
    <property type="component" value="Chromosome 1"/>
</dbReference>
<dbReference type="GO" id="GO:0005737">
    <property type="term" value="C:cytoplasm"/>
    <property type="evidence" value="ECO:0007669"/>
    <property type="project" value="UniProtKB-SubCell"/>
</dbReference>
<dbReference type="GO" id="GO:0003991">
    <property type="term" value="F:acetylglutamate kinase activity"/>
    <property type="evidence" value="ECO:0007669"/>
    <property type="project" value="UniProtKB-UniRule"/>
</dbReference>
<dbReference type="GO" id="GO:0005524">
    <property type="term" value="F:ATP binding"/>
    <property type="evidence" value="ECO:0007669"/>
    <property type="project" value="UniProtKB-UniRule"/>
</dbReference>
<dbReference type="GO" id="GO:0042450">
    <property type="term" value="P:arginine biosynthetic process via ornithine"/>
    <property type="evidence" value="ECO:0007669"/>
    <property type="project" value="UniProtKB-UniRule"/>
</dbReference>
<dbReference type="GO" id="GO:0006526">
    <property type="term" value="P:L-arginine biosynthetic process"/>
    <property type="evidence" value="ECO:0007669"/>
    <property type="project" value="UniProtKB-UniPathway"/>
</dbReference>
<dbReference type="CDD" id="cd04250">
    <property type="entry name" value="AAK_NAGK-C"/>
    <property type="match status" value="1"/>
</dbReference>
<dbReference type="FunFam" id="3.40.1160.10:FF:000004">
    <property type="entry name" value="Acetylglutamate kinase"/>
    <property type="match status" value="1"/>
</dbReference>
<dbReference type="Gene3D" id="3.40.1160.10">
    <property type="entry name" value="Acetylglutamate kinase-like"/>
    <property type="match status" value="1"/>
</dbReference>
<dbReference type="HAMAP" id="MF_00082">
    <property type="entry name" value="ArgB"/>
    <property type="match status" value="1"/>
</dbReference>
<dbReference type="InterPro" id="IPR036393">
    <property type="entry name" value="AceGlu_kinase-like_sf"/>
</dbReference>
<dbReference type="InterPro" id="IPR004662">
    <property type="entry name" value="AcgluKinase_fam"/>
</dbReference>
<dbReference type="InterPro" id="IPR037528">
    <property type="entry name" value="ArgB"/>
</dbReference>
<dbReference type="InterPro" id="IPR001048">
    <property type="entry name" value="Asp/Glu/Uridylate_kinase"/>
</dbReference>
<dbReference type="InterPro" id="IPR041727">
    <property type="entry name" value="NAGK-C"/>
</dbReference>
<dbReference type="NCBIfam" id="TIGR00761">
    <property type="entry name" value="argB"/>
    <property type="match status" value="1"/>
</dbReference>
<dbReference type="PANTHER" id="PTHR23342">
    <property type="entry name" value="N-ACETYLGLUTAMATE SYNTHASE"/>
    <property type="match status" value="1"/>
</dbReference>
<dbReference type="PANTHER" id="PTHR23342:SF0">
    <property type="entry name" value="N-ACETYLGLUTAMATE SYNTHASE, MITOCHONDRIAL"/>
    <property type="match status" value="1"/>
</dbReference>
<dbReference type="Pfam" id="PF00696">
    <property type="entry name" value="AA_kinase"/>
    <property type="match status" value="1"/>
</dbReference>
<dbReference type="PIRSF" id="PIRSF000728">
    <property type="entry name" value="NAGK"/>
    <property type="match status" value="1"/>
</dbReference>
<dbReference type="SUPFAM" id="SSF53633">
    <property type="entry name" value="Carbamate kinase-like"/>
    <property type="match status" value="1"/>
</dbReference>
<proteinExistence type="inferred from homology"/>
<gene>
    <name evidence="1" type="primary">argB</name>
    <name type="ordered locus">BPSL0200</name>
</gene>
<evidence type="ECO:0000255" key="1">
    <source>
        <dbReference type="HAMAP-Rule" id="MF_00082"/>
    </source>
</evidence>